<reference key="1">
    <citation type="journal article" date="1993" name="Yeast">
        <title>Sequencing and analysis of 51.6 kilobases on the left arm of chromosome XI from Saccharomyces cerevisiae reveals 23 open reading frames including the FAS1 gene.</title>
        <authorList>
            <person name="Wiemann S."/>
            <person name="Voss H."/>
            <person name="Schwager C."/>
            <person name="Rupp T."/>
            <person name="Stegemann J."/>
            <person name="Zimmermann J."/>
            <person name="Grothues D."/>
            <person name="Sensen C."/>
            <person name="Erfle H."/>
            <person name="Hewitt N."/>
            <person name="Banrevi A."/>
            <person name="Ansorge W."/>
        </authorList>
    </citation>
    <scope>NUCLEOTIDE SEQUENCE [GENOMIC DNA]</scope>
</reference>
<reference key="2">
    <citation type="journal article" date="1994" name="Nature">
        <title>Complete DNA sequence of yeast chromosome XI.</title>
        <authorList>
            <person name="Dujon B."/>
            <person name="Alexandraki D."/>
            <person name="Andre B."/>
            <person name="Ansorge W."/>
            <person name="Baladron V."/>
            <person name="Ballesta J.P.G."/>
            <person name="Banrevi A."/>
            <person name="Bolle P.-A."/>
            <person name="Bolotin-Fukuhara M."/>
            <person name="Bossier P."/>
            <person name="Bou G."/>
            <person name="Boyer J."/>
            <person name="Buitrago M.J."/>
            <person name="Cheret G."/>
            <person name="Colleaux L."/>
            <person name="Daignan-Fornier B."/>
            <person name="del Rey F."/>
            <person name="Dion C."/>
            <person name="Domdey H."/>
            <person name="Duesterhoeft A."/>
            <person name="Duesterhus S."/>
            <person name="Entian K.-D."/>
            <person name="Erfle H."/>
            <person name="Esteban P.F."/>
            <person name="Feldmann H."/>
            <person name="Fernandes L."/>
            <person name="Fobo G.M."/>
            <person name="Fritz C."/>
            <person name="Fukuhara H."/>
            <person name="Gabel C."/>
            <person name="Gaillon L."/>
            <person name="Garcia-Cantalejo J.M."/>
            <person name="Garcia-Ramirez J.J."/>
            <person name="Gent M.E."/>
            <person name="Ghazvini M."/>
            <person name="Goffeau A."/>
            <person name="Gonzalez A."/>
            <person name="Grothues D."/>
            <person name="Guerreiro P."/>
            <person name="Hegemann J.H."/>
            <person name="Hewitt N."/>
            <person name="Hilger F."/>
            <person name="Hollenberg C.P."/>
            <person name="Horaitis O."/>
            <person name="Indge K.J."/>
            <person name="Jacquier A."/>
            <person name="James C.M."/>
            <person name="Jauniaux J.-C."/>
            <person name="Jimenez A."/>
            <person name="Keuchel H."/>
            <person name="Kirchrath L."/>
            <person name="Kleine K."/>
            <person name="Koetter P."/>
            <person name="Legrain P."/>
            <person name="Liebl S."/>
            <person name="Louis E.J."/>
            <person name="Maia e Silva A."/>
            <person name="Marck C."/>
            <person name="Monnier A.-L."/>
            <person name="Moestl D."/>
            <person name="Mueller S."/>
            <person name="Obermaier B."/>
            <person name="Oliver S.G."/>
            <person name="Pallier C."/>
            <person name="Pascolo S."/>
            <person name="Pfeiffer F."/>
            <person name="Philippsen P."/>
            <person name="Planta R.J."/>
            <person name="Pohl F.M."/>
            <person name="Pohl T.M."/>
            <person name="Poehlmann R."/>
            <person name="Portetelle D."/>
            <person name="Purnelle B."/>
            <person name="Puzos V."/>
            <person name="Ramezani Rad M."/>
            <person name="Rasmussen S.W."/>
            <person name="Remacha M.A."/>
            <person name="Revuelta J.L."/>
            <person name="Richard G.-F."/>
            <person name="Rieger M."/>
            <person name="Rodrigues-Pousada C."/>
            <person name="Rose M."/>
            <person name="Rupp T."/>
            <person name="Santos M.A."/>
            <person name="Schwager C."/>
            <person name="Sensen C."/>
            <person name="Skala J."/>
            <person name="Soares H."/>
            <person name="Sor F."/>
            <person name="Stegemann J."/>
            <person name="Tettelin H."/>
            <person name="Thierry A."/>
            <person name="Tzermia M."/>
            <person name="Urrestarazu L.A."/>
            <person name="van Dyck L."/>
            <person name="van Vliet-Reedijk J.C."/>
            <person name="Valens M."/>
            <person name="Vandenbol M."/>
            <person name="Vilela C."/>
            <person name="Vissers S."/>
            <person name="von Wettstein D."/>
            <person name="Voss H."/>
            <person name="Wiemann S."/>
            <person name="Xu G."/>
            <person name="Zimmermann J."/>
            <person name="Haasemann M."/>
            <person name="Becker I."/>
            <person name="Mewes H.-W."/>
        </authorList>
    </citation>
    <scope>NUCLEOTIDE SEQUENCE [LARGE SCALE GENOMIC DNA]</scope>
    <source>
        <strain>ATCC 204508 / S288c</strain>
    </source>
</reference>
<reference key="3">
    <citation type="journal article" date="2014" name="G3 (Bethesda)">
        <title>The reference genome sequence of Saccharomyces cerevisiae: Then and now.</title>
        <authorList>
            <person name="Engel S.R."/>
            <person name="Dietrich F.S."/>
            <person name="Fisk D.G."/>
            <person name="Binkley G."/>
            <person name="Balakrishnan R."/>
            <person name="Costanzo M.C."/>
            <person name="Dwight S.S."/>
            <person name="Hitz B.C."/>
            <person name="Karra K."/>
            <person name="Nash R.S."/>
            <person name="Weng S."/>
            <person name="Wong E.D."/>
            <person name="Lloyd P."/>
            <person name="Skrzypek M.S."/>
            <person name="Miyasato S.R."/>
            <person name="Simison M."/>
            <person name="Cherry J.M."/>
        </authorList>
    </citation>
    <scope>GENOME REANNOTATION</scope>
    <source>
        <strain>ATCC 204508 / S288c</strain>
    </source>
</reference>
<reference key="4">
    <citation type="journal article" date="2007" name="Genome Res.">
        <title>Approaching a complete repository of sequence-verified protein-encoding clones for Saccharomyces cerevisiae.</title>
        <authorList>
            <person name="Hu Y."/>
            <person name="Rolfs A."/>
            <person name="Bhullar B."/>
            <person name="Murthy T.V.S."/>
            <person name="Zhu C."/>
            <person name="Berger M.F."/>
            <person name="Camargo A.A."/>
            <person name="Kelley F."/>
            <person name="McCarron S."/>
            <person name="Jepson D."/>
            <person name="Richardson A."/>
            <person name="Raphael J."/>
            <person name="Moreira D."/>
            <person name="Taycher E."/>
            <person name="Zuo D."/>
            <person name="Mohr S."/>
            <person name="Kane M.F."/>
            <person name="Williamson J."/>
            <person name="Simpson A.J.G."/>
            <person name="Bulyk M.L."/>
            <person name="Harlow E."/>
            <person name="Marsischky G."/>
            <person name="Kolodner R.D."/>
            <person name="LaBaer J."/>
        </authorList>
    </citation>
    <scope>NUCLEOTIDE SEQUENCE [GENOMIC DNA]</scope>
    <source>
        <strain>ATCC 204508 / S288c</strain>
    </source>
</reference>
<proteinExistence type="uncertain"/>
<protein>
    <recommendedName>
        <fullName>Putative uncharacterized protein YKL177W</fullName>
    </recommendedName>
</protein>
<feature type="chain" id="PRO_0000203138" description="Putative uncharacterized protein YKL177W">
    <location>
        <begin position="1"/>
        <end position="112"/>
    </location>
</feature>
<evidence type="ECO:0000305" key="1"/>
<evidence type="ECO:0000305" key="2">
    <source>
    </source>
</evidence>
<sequence>MMLVTAHDMPIFAPTCNLMTISHQPLPSHLVRKSSSLHIAASTIHVKFIVRSHVIKMIAGIFLVCECHAKGGANSITASKQSPIIADLYDMKILIVFCLSYTNLIASKVKKQ</sequence>
<organism>
    <name type="scientific">Saccharomyces cerevisiae (strain ATCC 204508 / S288c)</name>
    <name type="common">Baker's yeast</name>
    <dbReference type="NCBI Taxonomy" id="559292"/>
    <lineage>
        <taxon>Eukaryota</taxon>
        <taxon>Fungi</taxon>
        <taxon>Dikarya</taxon>
        <taxon>Ascomycota</taxon>
        <taxon>Saccharomycotina</taxon>
        <taxon>Saccharomycetes</taxon>
        <taxon>Saccharomycetales</taxon>
        <taxon>Saccharomycetaceae</taxon>
        <taxon>Saccharomyces</taxon>
    </lineage>
</organism>
<name>YKR7_YEAST</name>
<accession>P34238</accession>
<dbReference type="EMBL" id="X74151">
    <property type="protein sequence ID" value="CAA52260.1"/>
    <property type="molecule type" value="Genomic_DNA"/>
</dbReference>
<dbReference type="EMBL" id="Z28177">
    <property type="protein sequence ID" value="CAA82020.1"/>
    <property type="molecule type" value="Genomic_DNA"/>
</dbReference>
<dbReference type="EMBL" id="AY558360">
    <property type="protein sequence ID" value="AAS56686.1"/>
    <property type="molecule type" value="Genomic_DNA"/>
</dbReference>
<dbReference type="PIR" id="S34693">
    <property type="entry name" value="S34693"/>
</dbReference>
<dbReference type="DIP" id="DIP-2086N"/>
<dbReference type="STRING" id="4932.YKL177W"/>
<dbReference type="PaxDb" id="4932-YKL177W"/>
<dbReference type="EnsemblFungi" id="YKL177W_mRNA">
    <property type="protein sequence ID" value="YKL177W"/>
    <property type="gene ID" value="YKL177W"/>
</dbReference>
<dbReference type="AGR" id="SGD:S000001660"/>
<dbReference type="SGD" id="S000001660">
    <property type="gene designation" value="YKL177W"/>
</dbReference>
<dbReference type="HOGENOM" id="CLU_2147817_0_0_1"/>
<comment type="miscellaneous">
    <text evidence="1">Partially overlaps STE3.</text>
</comment>
<comment type="caution">
    <text evidence="2">Product of a dubious gene prediction unlikely to encode a functional protein. Because of that it is not part of the S.cerevisiae S288c complete/reference proteome set.</text>
</comment>
<gene>
    <name type="ordered locus">YKL177W</name>
</gene>